<organism>
    <name type="scientific">Rhizobium etli (strain CIAT 652)</name>
    <dbReference type="NCBI Taxonomy" id="491916"/>
    <lineage>
        <taxon>Bacteria</taxon>
        <taxon>Pseudomonadati</taxon>
        <taxon>Pseudomonadota</taxon>
        <taxon>Alphaproteobacteria</taxon>
        <taxon>Hyphomicrobiales</taxon>
        <taxon>Rhizobiaceae</taxon>
        <taxon>Rhizobium/Agrobacterium group</taxon>
        <taxon>Rhizobium</taxon>
    </lineage>
</organism>
<dbReference type="EMBL" id="CP001074">
    <property type="protein sequence ID" value="ACE90725.1"/>
    <property type="molecule type" value="Genomic_DNA"/>
</dbReference>
<dbReference type="SMR" id="B3PWS7"/>
<dbReference type="KEGG" id="rec:RHECIAT_CH0001755"/>
<dbReference type="eggNOG" id="COG0092">
    <property type="taxonomic scope" value="Bacteria"/>
</dbReference>
<dbReference type="HOGENOM" id="CLU_058591_0_2_5"/>
<dbReference type="Proteomes" id="UP000008817">
    <property type="component" value="Chromosome"/>
</dbReference>
<dbReference type="GO" id="GO:0022627">
    <property type="term" value="C:cytosolic small ribosomal subunit"/>
    <property type="evidence" value="ECO:0007669"/>
    <property type="project" value="TreeGrafter"/>
</dbReference>
<dbReference type="GO" id="GO:0003729">
    <property type="term" value="F:mRNA binding"/>
    <property type="evidence" value="ECO:0007669"/>
    <property type="project" value="UniProtKB-UniRule"/>
</dbReference>
<dbReference type="GO" id="GO:0019843">
    <property type="term" value="F:rRNA binding"/>
    <property type="evidence" value="ECO:0007669"/>
    <property type="project" value="UniProtKB-UniRule"/>
</dbReference>
<dbReference type="GO" id="GO:0003735">
    <property type="term" value="F:structural constituent of ribosome"/>
    <property type="evidence" value="ECO:0007669"/>
    <property type="project" value="InterPro"/>
</dbReference>
<dbReference type="GO" id="GO:0006412">
    <property type="term" value="P:translation"/>
    <property type="evidence" value="ECO:0007669"/>
    <property type="project" value="UniProtKB-UniRule"/>
</dbReference>
<dbReference type="CDD" id="cd02412">
    <property type="entry name" value="KH-II_30S_S3"/>
    <property type="match status" value="1"/>
</dbReference>
<dbReference type="FunFam" id="3.30.1140.32:FF:000001">
    <property type="entry name" value="30S ribosomal protein S3"/>
    <property type="match status" value="1"/>
</dbReference>
<dbReference type="FunFam" id="3.30.300.20:FF:000001">
    <property type="entry name" value="30S ribosomal protein S3"/>
    <property type="match status" value="1"/>
</dbReference>
<dbReference type="Gene3D" id="3.30.300.20">
    <property type="match status" value="1"/>
</dbReference>
<dbReference type="Gene3D" id="3.30.1140.32">
    <property type="entry name" value="Ribosomal protein S3, C-terminal domain"/>
    <property type="match status" value="1"/>
</dbReference>
<dbReference type="HAMAP" id="MF_01309_B">
    <property type="entry name" value="Ribosomal_uS3_B"/>
    <property type="match status" value="1"/>
</dbReference>
<dbReference type="InterPro" id="IPR004087">
    <property type="entry name" value="KH_dom"/>
</dbReference>
<dbReference type="InterPro" id="IPR015946">
    <property type="entry name" value="KH_dom-like_a/b"/>
</dbReference>
<dbReference type="InterPro" id="IPR004044">
    <property type="entry name" value="KH_dom_type_2"/>
</dbReference>
<dbReference type="InterPro" id="IPR009019">
    <property type="entry name" value="KH_sf_prok-type"/>
</dbReference>
<dbReference type="InterPro" id="IPR036419">
    <property type="entry name" value="Ribosomal_S3_C_sf"/>
</dbReference>
<dbReference type="InterPro" id="IPR005704">
    <property type="entry name" value="Ribosomal_uS3_bac-typ"/>
</dbReference>
<dbReference type="InterPro" id="IPR001351">
    <property type="entry name" value="Ribosomal_uS3_C"/>
</dbReference>
<dbReference type="InterPro" id="IPR018280">
    <property type="entry name" value="Ribosomal_uS3_CS"/>
</dbReference>
<dbReference type="NCBIfam" id="TIGR01009">
    <property type="entry name" value="rpsC_bact"/>
    <property type="match status" value="1"/>
</dbReference>
<dbReference type="PANTHER" id="PTHR11760">
    <property type="entry name" value="30S/40S RIBOSOMAL PROTEIN S3"/>
    <property type="match status" value="1"/>
</dbReference>
<dbReference type="PANTHER" id="PTHR11760:SF19">
    <property type="entry name" value="SMALL RIBOSOMAL SUBUNIT PROTEIN US3C"/>
    <property type="match status" value="1"/>
</dbReference>
<dbReference type="Pfam" id="PF07650">
    <property type="entry name" value="KH_2"/>
    <property type="match status" value="1"/>
</dbReference>
<dbReference type="Pfam" id="PF00189">
    <property type="entry name" value="Ribosomal_S3_C"/>
    <property type="match status" value="1"/>
</dbReference>
<dbReference type="SMART" id="SM00322">
    <property type="entry name" value="KH"/>
    <property type="match status" value="1"/>
</dbReference>
<dbReference type="SUPFAM" id="SSF54814">
    <property type="entry name" value="Prokaryotic type KH domain (KH-domain type II)"/>
    <property type="match status" value="1"/>
</dbReference>
<dbReference type="SUPFAM" id="SSF54821">
    <property type="entry name" value="Ribosomal protein S3 C-terminal domain"/>
    <property type="match status" value="1"/>
</dbReference>
<dbReference type="PROSITE" id="PS50823">
    <property type="entry name" value="KH_TYPE_2"/>
    <property type="match status" value="1"/>
</dbReference>
<dbReference type="PROSITE" id="PS00548">
    <property type="entry name" value="RIBOSOMAL_S3"/>
    <property type="match status" value="1"/>
</dbReference>
<comment type="function">
    <text evidence="1">Binds the lower part of the 30S subunit head. Binds mRNA in the 70S ribosome, positioning it for translation.</text>
</comment>
<comment type="subunit">
    <text evidence="1">Part of the 30S ribosomal subunit. Forms a tight complex with proteins S10 and S14.</text>
</comment>
<comment type="similarity">
    <text evidence="1">Belongs to the universal ribosomal protein uS3 family.</text>
</comment>
<reference key="1">
    <citation type="journal article" date="2010" name="Appl. Environ. Microbiol.">
        <title>Conserved symbiotic plasmid DNA sequences in the multireplicon pangenomic structure of Rhizobium etli.</title>
        <authorList>
            <person name="Gonzalez V."/>
            <person name="Acosta J.L."/>
            <person name="Santamaria R.I."/>
            <person name="Bustos P."/>
            <person name="Fernandez J.L."/>
            <person name="Hernandez Gonzalez I.L."/>
            <person name="Diaz R."/>
            <person name="Flores M."/>
            <person name="Palacios R."/>
            <person name="Mora J."/>
            <person name="Davila G."/>
        </authorList>
    </citation>
    <scope>NUCLEOTIDE SEQUENCE [LARGE SCALE GENOMIC DNA]</scope>
    <source>
        <strain>CIAT 652</strain>
    </source>
</reference>
<accession>B3PWS7</accession>
<evidence type="ECO:0000255" key="1">
    <source>
        <dbReference type="HAMAP-Rule" id="MF_01309"/>
    </source>
</evidence>
<evidence type="ECO:0000256" key="2">
    <source>
        <dbReference type="SAM" id="MobiDB-lite"/>
    </source>
</evidence>
<evidence type="ECO:0000305" key="3"/>
<proteinExistence type="inferred from homology"/>
<keyword id="KW-0687">Ribonucleoprotein</keyword>
<keyword id="KW-0689">Ribosomal protein</keyword>
<keyword id="KW-0694">RNA-binding</keyword>
<keyword id="KW-0699">rRNA-binding</keyword>
<sequence>MGQKINPIGFRLGINRTWDSRWFADNAEYGQLLHEDLKMRKFVMSELKQAGISKVVIERPHKKCRVTIHSARPGLIIGRKGADIDKLRKKLSDMTNSETHLNIVEVRKPEVDATLVAQSIAQQLERRVAFRRAMKRAVQSAMRLGAEGIKITCAGRLGGAEIARTEWYREGRVPLHTLRADIDYGTAEAETAFGICGIKVWIFKGEILEHDPMASERRALEGDAQGPASRERDRGDRRRERDNA</sequence>
<protein>
    <recommendedName>
        <fullName evidence="1">Small ribosomal subunit protein uS3</fullName>
    </recommendedName>
    <alternativeName>
        <fullName evidence="3">30S ribosomal protein S3</fullName>
    </alternativeName>
</protein>
<feature type="chain" id="PRO_1000141006" description="Small ribosomal subunit protein uS3">
    <location>
        <begin position="1"/>
        <end position="244"/>
    </location>
</feature>
<feature type="domain" description="KH type-2" evidence="1">
    <location>
        <begin position="39"/>
        <end position="107"/>
    </location>
</feature>
<feature type="region of interest" description="Disordered" evidence="2">
    <location>
        <begin position="214"/>
        <end position="244"/>
    </location>
</feature>
<feature type="compositionally biased region" description="Basic and acidic residues" evidence="2">
    <location>
        <begin position="229"/>
        <end position="244"/>
    </location>
</feature>
<gene>
    <name evidence="1" type="primary">rpsC</name>
    <name type="ordered locus">RHECIAT_CH0001755</name>
</gene>
<name>RS3_RHIE6</name>